<comment type="function">
    <text evidence="1">Involved in the binding of tRNA to the ribosomes.</text>
</comment>
<comment type="subunit">
    <text evidence="1">Part of the 30S ribosomal subunit.</text>
</comment>
<comment type="similarity">
    <text evidence="1">Belongs to the universal ribosomal protein uS10 family.</text>
</comment>
<evidence type="ECO:0000255" key="1">
    <source>
        <dbReference type="HAMAP-Rule" id="MF_00508"/>
    </source>
</evidence>
<evidence type="ECO:0000305" key="2"/>
<accession>Q0I164</accession>
<protein>
    <recommendedName>
        <fullName evidence="1">Small ribosomal subunit protein uS10</fullName>
    </recommendedName>
    <alternativeName>
        <fullName evidence="2">30S ribosomal protein S10</fullName>
    </alternativeName>
</protein>
<name>RS10_HISS1</name>
<feature type="chain" id="PRO_1000015032" description="Small ribosomal subunit protein uS10">
    <location>
        <begin position="1"/>
        <end position="103"/>
    </location>
</feature>
<gene>
    <name evidence="1" type="primary">rpsJ</name>
    <name type="ordered locus">HS_0058</name>
</gene>
<keyword id="KW-0687">Ribonucleoprotein</keyword>
<keyword id="KW-0689">Ribosomal protein</keyword>
<proteinExistence type="inferred from homology"/>
<sequence length="103" mass="11767">MQNQRIRIRLKAFDHRLIDQSTAEIVETAKRTGAQVRGPIPLPTRKERFTVLISPHVNKDARDQYEIRTHKRLVDIVEPTEKTVDALMRLDLAAGVDVQISLG</sequence>
<dbReference type="EMBL" id="CP000436">
    <property type="protein sequence ID" value="ABI24339.1"/>
    <property type="molecule type" value="Genomic_DNA"/>
</dbReference>
<dbReference type="SMR" id="Q0I164"/>
<dbReference type="KEGG" id="hso:HS_0058"/>
<dbReference type="eggNOG" id="COG0051">
    <property type="taxonomic scope" value="Bacteria"/>
</dbReference>
<dbReference type="HOGENOM" id="CLU_122625_1_3_6"/>
<dbReference type="GO" id="GO:1990904">
    <property type="term" value="C:ribonucleoprotein complex"/>
    <property type="evidence" value="ECO:0007669"/>
    <property type="project" value="UniProtKB-KW"/>
</dbReference>
<dbReference type="GO" id="GO:0005840">
    <property type="term" value="C:ribosome"/>
    <property type="evidence" value="ECO:0007669"/>
    <property type="project" value="UniProtKB-KW"/>
</dbReference>
<dbReference type="GO" id="GO:0003735">
    <property type="term" value="F:structural constituent of ribosome"/>
    <property type="evidence" value="ECO:0007669"/>
    <property type="project" value="InterPro"/>
</dbReference>
<dbReference type="GO" id="GO:0000049">
    <property type="term" value="F:tRNA binding"/>
    <property type="evidence" value="ECO:0007669"/>
    <property type="project" value="UniProtKB-UniRule"/>
</dbReference>
<dbReference type="GO" id="GO:0006412">
    <property type="term" value="P:translation"/>
    <property type="evidence" value="ECO:0007669"/>
    <property type="project" value="UniProtKB-UniRule"/>
</dbReference>
<dbReference type="FunFam" id="3.30.70.600:FF:000001">
    <property type="entry name" value="30S ribosomal protein S10"/>
    <property type="match status" value="1"/>
</dbReference>
<dbReference type="Gene3D" id="3.30.70.600">
    <property type="entry name" value="Ribosomal protein S10 domain"/>
    <property type="match status" value="1"/>
</dbReference>
<dbReference type="HAMAP" id="MF_00508">
    <property type="entry name" value="Ribosomal_uS10"/>
    <property type="match status" value="1"/>
</dbReference>
<dbReference type="InterPro" id="IPR001848">
    <property type="entry name" value="Ribosomal_uS10"/>
</dbReference>
<dbReference type="InterPro" id="IPR018268">
    <property type="entry name" value="Ribosomal_uS10_CS"/>
</dbReference>
<dbReference type="InterPro" id="IPR027486">
    <property type="entry name" value="Ribosomal_uS10_dom"/>
</dbReference>
<dbReference type="InterPro" id="IPR036838">
    <property type="entry name" value="Ribosomal_uS10_dom_sf"/>
</dbReference>
<dbReference type="NCBIfam" id="NF001861">
    <property type="entry name" value="PRK00596.1"/>
    <property type="match status" value="1"/>
</dbReference>
<dbReference type="NCBIfam" id="TIGR01049">
    <property type="entry name" value="rpsJ_bact"/>
    <property type="match status" value="1"/>
</dbReference>
<dbReference type="PANTHER" id="PTHR11700">
    <property type="entry name" value="30S RIBOSOMAL PROTEIN S10 FAMILY MEMBER"/>
    <property type="match status" value="1"/>
</dbReference>
<dbReference type="Pfam" id="PF00338">
    <property type="entry name" value="Ribosomal_S10"/>
    <property type="match status" value="1"/>
</dbReference>
<dbReference type="PRINTS" id="PR00971">
    <property type="entry name" value="RIBOSOMALS10"/>
</dbReference>
<dbReference type="SMART" id="SM01403">
    <property type="entry name" value="Ribosomal_S10"/>
    <property type="match status" value="1"/>
</dbReference>
<dbReference type="SUPFAM" id="SSF54999">
    <property type="entry name" value="Ribosomal protein S10"/>
    <property type="match status" value="1"/>
</dbReference>
<dbReference type="PROSITE" id="PS00361">
    <property type="entry name" value="RIBOSOMAL_S10"/>
    <property type="match status" value="1"/>
</dbReference>
<reference key="1">
    <citation type="journal article" date="2007" name="J. Bacteriol.">
        <title>Complete genome sequence of Haemophilus somnus (Histophilus somni) strain 129Pt and comparison to Haemophilus ducreyi 35000HP and Haemophilus influenzae Rd.</title>
        <authorList>
            <person name="Challacombe J.F."/>
            <person name="Duncan A.J."/>
            <person name="Brettin T.S."/>
            <person name="Bruce D."/>
            <person name="Chertkov O."/>
            <person name="Detter J.C."/>
            <person name="Han C.S."/>
            <person name="Misra M."/>
            <person name="Richardson P."/>
            <person name="Tapia R."/>
            <person name="Thayer N."/>
            <person name="Xie G."/>
            <person name="Inzana T.J."/>
        </authorList>
    </citation>
    <scope>NUCLEOTIDE SEQUENCE [LARGE SCALE GENOMIC DNA]</scope>
    <source>
        <strain>129Pt</strain>
    </source>
</reference>
<organism>
    <name type="scientific">Histophilus somni (strain 129Pt)</name>
    <name type="common">Haemophilus somnus</name>
    <dbReference type="NCBI Taxonomy" id="205914"/>
    <lineage>
        <taxon>Bacteria</taxon>
        <taxon>Pseudomonadati</taxon>
        <taxon>Pseudomonadota</taxon>
        <taxon>Gammaproteobacteria</taxon>
        <taxon>Pasteurellales</taxon>
        <taxon>Pasteurellaceae</taxon>
        <taxon>Histophilus</taxon>
    </lineage>
</organism>